<evidence type="ECO:0000255" key="1">
    <source>
        <dbReference type="PROSITE-ProRule" id="PRU00556"/>
    </source>
</evidence>
<evidence type="ECO:0000269" key="2">
    <source>
    </source>
</evidence>
<evidence type="ECO:0000269" key="3">
    <source>
    </source>
</evidence>
<evidence type="ECO:0000269" key="4">
    <source>
    </source>
</evidence>
<evidence type="ECO:0000269" key="5">
    <source>
    </source>
</evidence>
<evidence type="ECO:0000303" key="6">
    <source>
    </source>
</evidence>
<evidence type="ECO:0000305" key="7"/>
<evidence type="ECO:0007829" key="8">
    <source>
        <dbReference type="PDB" id="3QQ2"/>
    </source>
</evidence>
<sequence length="1010" mass="103377">MYLDRFRQCPSSLQIPRSAWRLHALAAALALAGMARLAPAAAQAPQPPVAGAPHAQDAGQEGEFDHRDNTLIAVFDDGVGINLDDDPDELGETAPPTLKDIHISVEHKNPMSKPAIGVRVSGAGRALTLAGSTIDATEGGIPAVVRRGGTLELDGVTVAGGEGMEPMTVSDAGSRLSVRGGVLGGEAPGVGLVRAAQGGQASIIDATLQSILGPALIADGGSISVAGGSIDMDMGPGFPPPPPPLPGAPLAAHPPLDRVAAVHAGQDGKVTLREVALRAHGPQATGVYAYMPGSEITLQGGTVSVQGDDGAGVVAGAGLLDALPPGGTVRLDGTTVSTDGANTDAVLVRGDAARAEVVNTVLRTAKSLAAGVSAQHGGRVTLRQTRIETAGAGAEGISVLGFEPQSGSGPASVDMQGGSITTTGNRAAGIALTHGSARLEGVAVRAEGSGSSAAQLANGTLVVSAGSLASAQSGAISVTDTPLKLMPGALASSTVSVRLTDGATAQGGNGVFLQQHSTIPVAVALESGALARGDIVADGNKPLDAGISLSVASGAAWHGATQVLQSATLGKGGTWVVNADSRVQDMSMRGGRVEFQAPAPEASYKTLTLQTLDGNGVFVLNTNVAAGQNDQLRVTGRADGQHRVLVRNAGGEADSRGARLGLVHTQGQGNATFRLANVGKAVDLGTWRYSLAEDPKTHVWSLQRAGQALSGAANAAVNAADLSSIALAESNALDKRLGELRLRADAGGPWARTFSERQQISNRHARAYDQTVSGLEIGLDRGWSASGGRWYAGGLLGYTYADRTYPGDGGGKVKGLHVGGYAAYVGDGGYYLDTVLRLGRYDQQYNIAGTDGGRVTADYRTSGAAWSLEGGRRFELPNDWFAEPQAEVMLWRTSGKRYRASNGLRVKVDANTATLGRLGLRFGRRIALAGGNIVQPYARLGWTQEFKSTGDVRTNGIGHAGAGRHGRVELGAGVDAALGKGHNLYASYEYAAGDRINIPWSFHAGYRYSF</sequence>
<keyword id="KW-0002">3D-structure</keyword>
<keyword id="KW-0998">Cell outer membrane</keyword>
<keyword id="KW-0903">Direct protein sequencing</keyword>
<keyword id="KW-0472">Membrane</keyword>
<keyword id="KW-0574">Periplasm</keyword>
<keyword id="KW-1185">Reference proteome</keyword>
<keyword id="KW-0964">Secreted</keyword>
<keyword id="KW-0732">Signal</keyword>
<keyword id="KW-0812">Transmembrane</keyword>
<keyword id="KW-1134">Transmembrane beta strand</keyword>
<keyword id="KW-0843">Virulence</keyword>
<dbReference type="EMBL" id="U12276">
    <property type="protein sequence ID" value="AAA51646.1"/>
    <property type="molecule type" value="Genomic_DNA"/>
</dbReference>
<dbReference type="EMBL" id="BX640421">
    <property type="protein sequence ID" value="CAE43755.1"/>
    <property type="molecule type" value="Genomic_DNA"/>
</dbReference>
<dbReference type="PIR" id="I40329">
    <property type="entry name" value="I40329"/>
</dbReference>
<dbReference type="RefSeq" id="NP_882013.1">
    <property type="nucleotide sequence ID" value="NC_002929.2"/>
</dbReference>
<dbReference type="RefSeq" id="WP_010931506.1">
    <property type="nucleotide sequence ID" value="NZ_CP039022.1"/>
</dbReference>
<dbReference type="PDB" id="3QQ2">
    <property type="method" value="X-ray"/>
    <property type="resolution" value="3.00 A"/>
    <property type="chains" value="A/B/C=727-1010"/>
</dbReference>
<dbReference type="PDBsum" id="3QQ2"/>
<dbReference type="SMR" id="Q45340"/>
<dbReference type="STRING" id="257313.BP3494"/>
<dbReference type="TCDB" id="1.B.12.2.3">
    <property type="family name" value="the autotransporter-1 (at-1) family"/>
</dbReference>
<dbReference type="PaxDb" id="257313-BP3494"/>
<dbReference type="GeneID" id="69600507"/>
<dbReference type="KEGG" id="bpe:BP3494"/>
<dbReference type="PATRIC" id="fig|257313.5.peg.3783"/>
<dbReference type="eggNOG" id="COG3468">
    <property type="taxonomic scope" value="Bacteria"/>
</dbReference>
<dbReference type="HOGENOM" id="CLU_297135_0_0_4"/>
<dbReference type="EvolutionaryTrace" id="Q45340"/>
<dbReference type="Proteomes" id="UP000002676">
    <property type="component" value="Chromosome"/>
</dbReference>
<dbReference type="GO" id="GO:0009279">
    <property type="term" value="C:cell outer membrane"/>
    <property type="evidence" value="ECO:0007669"/>
    <property type="project" value="UniProtKB-SubCell"/>
</dbReference>
<dbReference type="GO" id="GO:0009986">
    <property type="term" value="C:cell surface"/>
    <property type="evidence" value="ECO:0007669"/>
    <property type="project" value="UniProtKB-SubCell"/>
</dbReference>
<dbReference type="GO" id="GO:0005576">
    <property type="term" value="C:extracellular region"/>
    <property type="evidence" value="ECO:0007669"/>
    <property type="project" value="UniProtKB-SubCell"/>
</dbReference>
<dbReference type="GO" id="GO:0042597">
    <property type="term" value="C:periplasmic space"/>
    <property type="evidence" value="ECO:0007669"/>
    <property type="project" value="UniProtKB-SubCell"/>
</dbReference>
<dbReference type="CDD" id="cd01343">
    <property type="entry name" value="PL1_Passenger_AT"/>
    <property type="match status" value="1"/>
</dbReference>
<dbReference type="Gene3D" id="2.160.20.20">
    <property type="match status" value="2"/>
</dbReference>
<dbReference type="Gene3D" id="2.40.128.130">
    <property type="entry name" value="Autotransporter beta-domain"/>
    <property type="match status" value="1"/>
</dbReference>
<dbReference type="InterPro" id="IPR005546">
    <property type="entry name" value="Autotransporte_beta"/>
</dbReference>
<dbReference type="InterPro" id="IPR036709">
    <property type="entry name" value="Autotransporte_beta_dom_sf"/>
</dbReference>
<dbReference type="InterPro" id="IPR051551">
    <property type="entry name" value="Autotransporter_adhesion"/>
</dbReference>
<dbReference type="InterPro" id="IPR012332">
    <property type="entry name" value="Autotransporter_pectin_lyase_C"/>
</dbReference>
<dbReference type="InterPro" id="IPR006315">
    <property type="entry name" value="OM_autotransptr_brl_dom"/>
</dbReference>
<dbReference type="InterPro" id="IPR011050">
    <property type="entry name" value="Pectin_lyase_fold/virulence"/>
</dbReference>
<dbReference type="InterPro" id="IPR004899">
    <property type="entry name" value="Pertactin_central"/>
</dbReference>
<dbReference type="InterPro" id="IPR003991">
    <property type="entry name" value="Pertactin_virulence_factor"/>
</dbReference>
<dbReference type="NCBIfam" id="TIGR01414">
    <property type="entry name" value="autotrans_barl"/>
    <property type="match status" value="1"/>
</dbReference>
<dbReference type="PANTHER" id="PTHR35037:SF7">
    <property type="entry name" value="AUTOTRANSPORTER"/>
    <property type="match status" value="1"/>
</dbReference>
<dbReference type="PANTHER" id="PTHR35037">
    <property type="entry name" value="C-TERMINAL REGION OF AIDA-LIKE PROTEIN"/>
    <property type="match status" value="1"/>
</dbReference>
<dbReference type="Pfam" id="PF03797">
    <property type="entry name" value="Autotransporter"/>
    <property type="match status" value="1"/>
</dbReference>
<dbReference type="Pfam" id="PF03212">
    <property type="entry name" value="Pertactin"/>
    <property type="match status" value="1"/>
</dbReference>
<dbReference type="PRINTS" id="PR01484">
    <property type="entry name" value="PRTACTNFAMLY"/>
</dbReference>
<dbReference type="SMART" id="SM00869">
    <property type="entry name" value="Autotransporter"/>
    <property type="match status" value="1"/>
</dbReference>
<dbReference type="SUPFAM" id="SSF103515">
    <property type="entry name" value="Autotransporter"/>
    <property type="match status" value="1"/>
</dbReference>
<dbReference type="SUPFAM" id="SSF51126">
    <property type="entry name" value="Pectin lyase-like"/>
    <property type="match status" value="1"/>
</dbReference>
<dbReference type="PROSITE" id="PS51208">
    <property type="entry name" value="AUTOTRANSPORTER"/>
    <property type="match status" value="1"/>
</dbReference>
<reference key="1">
    <citation type="journal article" date="1994" name="Infect. Immun.">
        <title>Cloning and sequencing of a Bordetella pertussis serum resistance locus.</title>
        <authorList>
            <person name="Fernandez R.C."/>
            <person name="Weiss A.A."/>
        </authorList>
    </citation>
    <scope>NUCLEOTIDE SEQUENCE [GENOMIC DNA]</scope>
    <source>
        <strain>Tohama I / BP338</strain>
    </source>
</reference>
<reference key="2">
    <citation type="journal article" date="2003" name="Nat. Genet.">
        <title>Comparative analysis of the genome sequences of Bordetella pertussis, Bordetella parapertussis and Bordetella bronchiseptica.</title>
        <authorList>
            <person name="Parkhill J."/>
            <person name="Sebaihia M."/>
            <person name="Preston A."/>
            <person name="Murphy L.D."/>
            <person name="Thomson N.R."/>
            <person name="Harris D.E."/>
            <person name="Holden M.T.G."/>
            <person name="Churcher C.M."/>
            <person name="Bentley S.D."/>
            <person name="Mungall K.L."/>
            <person name="Cerdeno-Tarraga A.-M."/>
            <person name="Temple L."/>
            <person name="James K.D."/>
            <person name="Harris B."/>
            <person name="Quail M.A."/>
            <person name="Achtman M."/>
            <person name="Atkin R."/>
            <person name="Baker S."/>
            <person name="Basham D."/>
            <person name="Bason N."/>
            <person name="Cherevach I."/>
            <person name="Chillingworth T."/>
            <person name="Collins M."/>
            <person name="Cronin A."/>
            <person name="Davis P."/>
            <person name="Doggett J."/>
            <person name="Feltwell T."/>
            <person name="Goble A."/>
            <person name="Hamlin N."/>
            <person name="Hauser H."/>
            <person name="Holroyd S."/>
            <person name="Jagels K."/>
            <person name="Leather S."/>
            <person name="Moule S."/>
            <person name="Norberczak H."/>
            <person name="O'Neil S."/>
            <person name="Ormond D."/>
            <person name="Price C."/>
            <person name="Rabbinowitsch E."/>
            <person name="Rutter S."/>
            <person name="Sanders M."/>
            <person name="Saunders D."/>
            <person name="Seeger K."/>
            <person name="Sharp S."/>
            <person name="Simmonds M."/>
            <person name="Skelton J."/>
            <person name="Squares R."/>
            <person name="Squares S."/>
            <person name="Stevens K."/>
            <person name="Unwin L."/>
            <person name="Whitehead S."/>
            <person name="Barrell B.G."/>
            <person name="Maskell D.J."/>
        </authorList>
    </citation>
    <scope>NUCLEOTIDE SEQUENCE [LARGE SCALE GENOMIC DNA]</scope>
    <source>
        <strain>Tohama I / ATCC BAA-589 / NCTC 13251</strain>
    </source>
</reference>
<reference key="3">
    <citation type="journal article" date="2003" name="J. Bacteriol.">
        <title>Identification of secretion determinants of the Bordetella pertussis BrkA autotransporter.</title>
        <authorList>
            <person name="Oliver D.C."/>
            <person name="Huang G."/>
            <person name="Fernandez R.C."/>
        </authorList>
    </citation>
    <scope>PROTEIN SEQUENCE OF 43-47</scope>
    <scope>SUBCELLULAR LOCATION</scope>
    <scope>DOMAIN</scope>
    <source>
        <strain>Tohama I / BP338</strain>
    </source>
</reference>
<reference key="4">
    <citation type="journal article" date="1999" name="FEMS Microbiol. Lett.">
        <title>Identification of Bordetella pertussis virulence-associated outer membrane proteins.</title>
        <authorList>
            <person name="Passerini de Rossi B.N."/>
            <person name="Friedman L.E."/>
            <person name="Gonzalez Flecha F.L."/>
            <person name="Castello P.R."/>
            <person name="Franco M.A."/>
            <person name="Rossi J.P.F.C."/>
        </authorList>
    </citation>
    <scope>PROTEIN SEQUENCE OF 732-743</scope>
    <scope>CLEAVAGE SITE</scope>
    <source>
        <strain>Tohama I / BP338</strain>
    </source>
</reference>
<reference key="5">
    <citation type="journal article" date="1999" name="J. Bacteriol.">
        <title>The C-terminal domain of the Bordetella pertussis autotransporter BrkA forms a pore in lipid bilayer membranes.</title>
        <authorList>
            <person name="Shannon J.L."/>
            <person name="Fernandez R.C."/>
        </authorList>
    </citation>
    <scope>PORE FORMATION</scope>
    <scope>DOMAIN</scope>
    <scope>SUBCELLULAR LOCATION</scope>
</reference>
<reference key="6">
    <citation type="journal article" date="2001" name="Infect. Immun.">
        <title>BrkA protein of Bordetella pertussis inhibits the classical pathway of complement after C1 deposition.</title>
        <authorList>
            <person name="Barnes M.G."/>
            <person name="Weiss A.A."/>
        </authorList>
    </citation>
    <scope>FUNCTION</scope>
    <source>
        <strain>Tohama I / BP338</strain>
    </source>
</reference>
<reference key="7">
    <citation type="journal article" date="2009" name="Acta Crystallogr. F">
        <title>Crystallographic characterization of the passenger domain of the Bordetella autotransporter BrkA.</title>
        <authorList>
            <person name="Zhao L."/>
            <person name="Nguyen N.T."/>
            <person name="Fernandez R.C."/>
            <person name="Murphy M.E."/>
        </authorList>
    </citation>
    <scope>CRYSTALLIZATION</scope>
</reference>
<accession>Q45340</accession>
<comment type="function">
    <text evidence="4">Inhibits the classical pathway of complement activation and prevents accumulation of deposited C4.</text>
</comment>
<comment type="subcellular location">
    <molecule>BrkA autotransporter</molecule>
    <subcellularLocation>
        <location evidence="7">Periplasm</location>
    </subcellularLocation>
</comment>
<comment type="subcellular location">
    <molecule>Serum resistance protein BrkA</molecule>
    <subcellularLocation>
        <location evidence="5">Secreted</location>
    </subcellularLocation>
    <subcellularLocation>
        <location evidence="5">Cell surface</location>
    </subcellularLocation>
</comment>
<comment type="subcellular location">
    <molecule>BrkA translocator</molecule>
    <subcellularLocation>
        <location evidence="3">Cell outer membrane</location>
        <topology evidence="7">Multi-pass membrane protein</topology>
    </subcellularLocation>
    <text evidence="3">The cleaved C-terminal fragment (autotransporter domain) is localized in the outer membrane.</text>
</comment>
<comment type="domain">
    <text evidence="3 5">The signal peptide, cleaved at the inner membrane, guides the autotransporter protein to the periplasmic space. Then, insertion of the C-terminal translocator domain in the outer membrane forms a hydrophilic pore for the translocation of the passenger domain to the bacterial cell surface, with subsequent cleavage. Finally, the mature protein remains tightly associated with the bacterium.</text>
</comment>
<comment type="domain">
    <text evidence="5">A 31- to 39-amino-acid region found immediately upstream of the translocator domain is essential for surface expression.</text>
</comment>
<name>BRKA_BORPE</name>
<proteinExistence type="evidence at protein level"/>
<feature type="signal peptide" evidence="5">
    <location>
        <begin position="1"/>
        <end position="42"/>
    </location>
</feature>
<feature type="chain" id="PRO_0000399092" description="BrkA autotransporter">
    <location>
        <begin position="43"/>
        <end position="1010"/>
    </location>
</feature>
<feature type="chain" id="PRO_0000399093" description="Serum resistance protein BrkA">
    <location>
        <begin position="43"/>
        <end position="731"/>
    </location>
</feature>
<feature type="chain" id="PRO_0000399094" description="BrkA translocator">
    <location>
        <begin position="732"/>
        <end position="1010"/>
    </location>
</feature>
<feature type="domain" description="Autotransporter" evidence="1">
    <location>
        <begin position="742"/>
        <end position="1010"/>
    </location>
</feature>
<feature type="site" description="Cleavage" evidence="2">
    <location>
        <begin position="731"/>
        <end position="732"/>
    </location>
</feature>
<feature type="sequence conflict" description="In Ref. 3; AA sequence." evidence="7" ref="3">
    <original>P</original>
    <variation>A</variation>
    <location>
        <position position="47"/>
    </location>
</feature>
<feature type="strand" evidence="8">
    <location>
        <begin position="747"/>
        <end position="760"/>
    </location>
</feature>
<feature type="strand" evidence="8">
    <location>
        <begin position="768"/>
        <end position="783"/>
    </location>
</feature>
<feature type="strand" evidence="8">
    <location>
        <begin position="788"/>
        <end position="804"/>
    </location>
</feature>
<feature type="strand" evidence="8">
    <location>
        <begin position="806"/>
        <end position="808"/>
    </location>
</feature>
<feature type="strand" evidence="8">
    <location>
        <begin position="812"/>
        <end position="846"/>
    </location>
</feature>
<feature type="strand" evidence="8">
    <location>
        <begin position="850"/>
        <end position="852"/>
    </location>
</feature>
<feature type="strand" evidence="8">
    <location>
        <begin position="856"/>
        <end position="872"/>
    </location>
</feature>
<feature type="helix" evidence="8">
    <location>
        <begin position="877"/>
        <end position="879"/>
    </location>
</feature>
<feature type="strand" evidence="8">
    <location>
        <begin position="880"/>
        <end position="893"/>
    </location>
</feature>
<feature type="strand" evidence="8">
    <location>
        <begin position="896"/>
        <end position="899"/>
    </location>
</feature>
<feature type="strand" evidence="8">
    <location>
        <begin position="905"/>
        <end position="908"/>
    </location>
</feature>
<feature type="strand" evidence="8">
    <location>
        <begin position="912"/>
        <end position="924"/>
    </location>
</feature>
<feature type="strand" evidence="8">
    <location>
        <begin position="929"/>
        <end position="931"/>
    </location>
</feature>
<feature type="strand" evidence="8">
    <location>
        <begin position="933"/>
        <end position="947"/>
    </location>
</feature>
<feature type="strand" evidence="8">
    <location>
        <begin position="967"/>
        <end position="978"/>
    </location>
</feature>
<feature type="turn" evidence="8">
    <location>
        <begin position="979"/>
        <end position="981"/>
    </location>
</feature>
<feature type="strand" evidence="8">
    <location>
        <begin position="982"/>
        <end position="995"/>
    </location>
</feature>
<feature type="strand" evidence="8">
    <location>
        <begin position="997"/>
        <end position="1008"/>
    </location>
</feature>
<protein>
    <recommendedName>
        <fullName>BrkA autotransporter</fullName>
    </recommendedName>
    <component>
        <recommendedName>
            <fullName>Serum resistance protein BrkA</fullName>
        </recommendedName>
    </component>
    <component>
        <recommendedName>
            <fullName>BrkA translocator</fullName>
        </recommendedName>
    </component>
</protein>
<organism>
    <name type="scientific">Bordetella pertussis (strain Tohama I / ATCC BAA-589 / NCTC 13251)</name>
    <dbReference type="NCBI Taxonomy" id="257313"/>
    <lineage>
        <taxon>Bacteria</taxon>
        <taxon>Pseudomonadati</taxon>
        <taxon>Pseudomonadota</taxon>
        <taxon>Betaproteobacteria</taxon>
        <taxon>Burkholderiales</taxon>
        <taxon>Alcaligenaceae</taxon>
        <taxon>Bordetella</taxon>
    </lineage>
</organism>
<gene>
    <name evidence="6" type="primary">brkA</name>
    <name type="ordered locus">BP3494</name>
</gene>